<name>EFTS_ANAPZ</name>
<keyword id="KW-0963">Cytoplasm</keyword>
<keyword id="KW-0251">Elongation factor</keyword>
<keyword id="KW-0648">Protein biosynthesis</keyword>
<evidence type="ECO:0000255" key="1">
    <source>
        <dbReference type="HAMAP-Rule" id="MF_00050"/>
    </source>
</evidence>
<proteinExistence type="inferred from homology"/>
<organism>
    <name type="scientific">Anaplasma phagocytophilum (strain HZ)</name>
    <dbReference type="NCBI Taxonomy" id="212042"/>
    <lineage>
        <taxon>Bacteria</taxon>
        <taxon>Pseudomonadati</taxon>
        <taxon>Pseudomonadota</taxon>
        <taxon>Alphaproteobacteria</taxon>
        <taxon>Rickettsiales</taxon>
        <taxon>Anaplasmataceae</taxon>
        <taxon>Anaplasma</taxon>
        <taxon>phagocytophilum group</taxon>
    </lineage>
</organism>
<accession>Q2GKU8</accession>
<protein>
    <recommendedName>
        <fullName evidence="1">Elongation factor Ts</fullName>
        <shortName evidence="1">EF-Ts</shortName>
    </recommendedName>
</protein>
<dbReference type="EMBL" id="CP000235">
    <property type="protein sequence ID" value="ABD44036.1"/>
    <property type="molecule type" value="Genomic_DNA"/>
</dbReference>
<dbReference type="RefSeq" id="WP_011450526.1">
    <property type="nucleotide sequence ID" value="NC_007797.1"/>
</dbReference>
<dbReference type="SMR" id="Q2GKU8"/>
<dbReference type="STRING" id="212042.APH_0398"/>
<dbReference type="PaxDb" id="212042-APH_0398"/>
<dbReference type="EnsemblBacteria" id="ABD44036">
    <property type="protein sequence ID" value="ABD44036"/>
    <property type="gene ID" value="APH_0398"/>
</dbReference>
<dbReference type="GeneID" id="92747422"/>
<dbReference type="KEGG" id="aph:APH_0398"/>
<dbReference type="eggNOG" id="COG0264">
    <property type="taxonomic scope" value="Bacteria"/>
</dbReference>
<dbReference type="HOGENOM" id="CLU_047155_2_0_5"/>
<dbReference type="Proteomes" id="UP000001943">
    <property type="component" value="Chromosome"/>
</dbReference>
<dbReference type="GO" id="GO:0005737">
    <property type="term" value="C:cytoplasm"/>
    <property type="evidence" value="ECO:0007669"/>
    <property type="project" value="UniProtKB-SubCell"/>
</dbReference>
<dbReference type="GO" id="GO:0003746">
    <property type="term" value="F:translation elongation factor activity"/>
    <property type="evidence" value="ECO:0007669"/>
    <property type="project" value="UniProtKB-UniRule"/>
</dbReference>
<dbReference type="CDD" id="cd14275">
    <property type="entry name" value="UBA_EF-Ts"/>
    <property type="match status" value="1"/>
</dbReference>
<dbReference type="FunFam" id="1.10.286.20:FF:000001">
    <property type="entry name" value="Elongation factor Ts"/>
    <property type="match status" value="1"/>
</dbReference>
<dbReference type="FunFam" id="1.10.8.10:FF:000001">
    <property type="entry name" value="Elongation factor Ts"/>
    <property type="match status" value="1"/>
</dbReference>
<dbReference type="Gene3D" id="1.10.286.20">
    <property type="match status" value="1"/>
</dbReference>
<dbReference type="Gene3D" id="1.10.8.10">
    <property type="entry name" value="DNA helicase RuvA subunit, C-terminal domain"/>
    <property type="match status" value="1"/>
</dbReference>
<dbReference type="Gene3D" id="3.30.479.20">
    <property type="entry name" value="Elongation factor Ts, dimerisation domain"/>
    <property type="match status" value="2"/>
</dbReference>
<dbReference type="HAMAP" id="MF_00050">
    <property type="entry name" value="EF_Ts"/>
    <property type="match status" value="1"/>
</dbReference>
<dbReference type="InterPro" id="IPR036402">
    <property type="entry name" value="EF-Ts_dimer_sf"/>
</dbReference>
<dbReference type="InterPro" id="IPR001816">
    <property type="entry name" value="Transl_elong_EFTs/EF1B"/>
</dbReference>
<dbReference type="InterPro" id="IPR014039">
    <property type="entry name" value="Transl_elong_EFTs/EF1B_dimer"/>
</dbReference>
<dbReference type="InterPro" id="IPR018101">
    <property type="entry name" value="Transl_elong_Ts_CS"/>
</dbReference>
<dbReference type="InterPro" id="IPR009060">
    <property type="entry name" value="UBA-like_sf"/>
</dbReference>
<dbReference type="NCBIfam" id="TIGR00116">
    <property type="entry name" value="tsf"/>
    <property type="match status" value="1"/>
</dbReference>
<dbReference type="PANTHER" id="PTHR11741">
    <property type="entry name" value="ELONGATION FACTOR TS"/>
    <property type="match status" value="1"/>
</dbReference>
<dbReference type="PANTHER" id="PTHR11741:SF0">
    <property type="entry name" value="ELONGATION FACTOR TS, MITOCHONDRIAL"/>
    <property type="match status" value="1"/>
</dbReference>
<dbReference type="Pfam" id="PF00889">
    <property type="entry name" value="EF_TS"/>
    <property type="match status" value="1"/>
</dbReference>
<dbReference type="SUPFAM" id="SSF54713">
    <property type="entry name" value="Elongation factor Ts (EF-Ts), dimerisation domain"/>
    <property type="match status" value="1"/>
</dbReference>
<dbReference type="SUPFAM" id="SSF46934">
    <property type="entry name" value="UBA-like"/>
    <property type="match status" value="1"/>
</dbReference>
<dbReference type="PROSITE" id="PS01126">
    <property type="entry name" value="EF_TS_1"/>
    <property type="match status" value="1"/>
</dbReference>
<reference key="1">
    <citation type="journal article" date="2006" name="PLoS Genet.">
        <title>Comparative genomics of emerging human ehrlichiosis agents.</title>
        <authorList>
            <person name="Dunning Hotopp J.C."/>
            <person name="Lin M."/>
            <person name="Madupu R."/>
            <person name="Crabtree J."/>
            <person name="Angiuoli S.V."/>
            <person name="Eisen J.A."/>
            <person name="Seshadri R."/>
            <person name="Ren Q."/>
            <person name="Wu M."/>
            <person name="Utterback T.R."/>
            <person name="Smith S."/>
            <person name="Lewis M."/>
            <person name="Khouri H."/>
            <person name="Zhang C."/>
            <person name="Niu H."/>
            <person name="Lin Q."/>
            <person name="Ohashi N."/>
            <person name="Zhi N."/>
            <person name="Nelson W.C."/>
            <person name="Brinkac L.M."/>
            <person name="Dodson R.J."/>
            <person name="Rosovitz M.J."/>
            <person name="Sundaram J.P."/>
            <person name="Daugherty S.C."/>
            <person name="Davidsen T."/>
            <person name="Durkin A.S."/>
            <person name="Gwinn M.L."/>
            <person name="Haft D.H."/>
            <person name="Selengut J.D."/>
            <person name="Sullivan S.A."/>
            <person name="Zafar N."/>
            <person name="Zhou L."/>
            <person name="Benahmed F."/>
            <person name="Forberger H."/>
            <person name="Halpin R."/>
            <person name="Mulligan S."/>
            <person name="Robinson J."/>
            <person name="White O."/>
            <person name="Rikihisa Y."/>
            <person name="Tettelin H."/>
        </authorList>
    </citation>
    <scope>NUCLEOTIDE SEQUENCE [LARGE SCALE GENOMIC DNA]</scope>
    <source>
        <strain>HZ</strain>
    </source>
</reference>
<feature type="chain" id="PRO_0000241460" description="Elongation factor Ts">
    <location>
        <begin position="1"/>
        <end position="287"/>
    </location>
</feature>
<feature type="region of interest" description="Involved in Mg(2+) ion dislocation from EF-Tu" evidence="1">
    <location>
        <begin position="79"/>
        <end position="82"/>
    </location>
</feature>
<sequence>MKIDVEVIKELRQITGAGIGDCKEALESCSGDMDKAREYLREKGLSKAYKKSHRDVADGLVAVFAEGDVGAILKLGSETDFVARNEKFRSLALGLVRGLYGYGVEDLEGFSASSYDGSRVADEIVAAAAVLGENVVLSGVGFVKLSGPGVIGSYVHGMVSEGLGKAAALVVLEGGPHSDELASFAKQLAMHIVAAKPEALSIDTLSSDVVDRERELVARQVEALGKPDSVAQKIIEGRMQKFFEEMVLLEQVFVMDGQTKIRDLLVQKGQSLKHEIRIAAYRLFAIA</sequence>
<gene>
    <name evidence="1" type="primary">tsf</name>
    <name type="ordered locus">APH_0398</name>
</gene>
<comment type="function">
    <text evidence="1">Associates with the EF-Tu.GDP complex and induces the exchange of GDP to GTP. It remains bound to the aminoacyl-tRNA.EF-Tu.GTP complex up to the GTP hydrolysis stage on the ribosome.</text>
</comment>
<comment type="subcellular location">
    <subcellularLocation>
        <location evidence="1">Cytoplasm</location>
    </subcellularLocation>
</comment>
<comment type="similarity">
    <text evidence="1">Belongs to the EF-Ts family.</text>
</comment>